<dbReference type="EC" id="2.7.1.23" evidence="1"/>
<dbReference type="EMBL" id="CP000939">
    <property type="protein sequence ID" value="ACA45782.1"/>
    <property type="molecule type" value="Genomic_DNA"/>
</dbReference>
<dbReference type="RefSeq" id="WP_011986440.1">
    <property type="nucleotide sequence ID" value="NC_010516.1"/>
</dbReference>
<dbReference type="SMR" id="B1IMN2"/>
<dbReference type="KEGG" id="cbb:CLD_2758"/>
<dbReference type="HOGENOM" id="CLU_008831_0_1_9"/>
<dbReference type="Proteomes" id="UP000008541">
    <property type="component" value="Chromosome"/>
</dbReference>
<dbReference type="GO" id="GO:0005737">
    <property type="term" value="C:cytoplasm"/>
    <property type="evidence" value="ECO:0007669"/>
    <property type="project" value="UniProtKB-SubCell"/>
</dbReference>
<dbReference type="GO" id="GO:0005524">
    <property type="term" value="F:ATP binding"/>
    <property type="evidence" value="ECO:0007669"/>
    <property type="project" value="UniProtKB-KW"/>
</dbReference>
<dbReference type="GO" id="GO:0046872">
    <property type="term" value="F:metal ion binding"/>
    <property type="evidence" value="ECO:0007669"/>
    <property type="project" value="UniProtKB-UniRule"/>
</dbReference>
<dbReference type="GO" id="GO:0051287">
    <property type="term" value="F:NAD binding"/>
    <property type="evidence" value="ECO:0007669"/>
    <property type="project" value="UniProtKB-ARBA"/>
</dbReference>
<dbReference type="GO" id="GO:0003951">
    <property type="term" value="F:NAD+ kinase activity"/>
    <property type="evidence" value="ECO:0007669"/>
    <property type="project" value="UniProtKB-UniRule"/>
</dbReference>
<dbReference type="GO" id="GO:0019674">
    <property type="term" value="P:NAD metabolic process"/>
    <property type="evidence" value="ECO:0007669"/>
    <property type="project" value="InterPro"/>
</dbReference>
<dbReference type="GO" id="GO:0006741">
    <property type="term" value="P:NADP biosynthetic process"/>
    <property type="evidence" value="ECO:0007669"/>
    <property type="project" value="UniProtKB-UniRule"/>
</dbReference>
<dbReference type="FunFam" id="2.60.200.30:FF:000011">
    <property type="entry name" value="NAD kinase"/>
    <property type="match status" value="1"/>
</dbReference>
<dbReference type="Gene3D" id="3.40.50.10330">
    <property type="entry name" value="Probable inorganic polyphosphate/atp-NAD kinase, domain 1"/>
    <property type="match status" value="1"/>
</dbReference>
<dbReference type="Gene3D" id="2.60.200.30">
    <property type="entry name" value="Probable inorganic polyphosphate/atp-NAD kinase, domain 2"/>
    <property type="match status" value="1"/>
</dbReference>
<dbReference type="HAMAP" id="MF_00361">
    <property type="entry name" value="NAD_kinase"/>
    <property type="match status" value="1"/>
</dbReference>
<dbReference type="InterPro" id="IPR017438">
    <property type="entry name" value="ATP-NAD_kinase_N"/>
</dbReference>
<dbReference type="InterPro" id="IPR017437">
    <property type="entry name" value="ATP-NAD_kinase_PpnK-typ_C"/>
</dbReference>
<dbReference type="InterPro" id="IPR016064">
    <property type="entry name" value="NAD/diacylglycerol_kinase_sf"/>
</dbReference>
<dbReference type="InterPro" id="IPR002504">
    <property type="entry name" value="NADK"/>
</dbReference>
<dbReference type="PANTHER" id="PTHR20275">
    <property type="entry name" value="NAD KINASE"/>
    <property type="match status" value="1"/>
</dbReference>
<dbReference type="PANTHER" id="PTHR20275:SF0">
    <property type="entry name" value="NAD KINASE"/>
    <property type="match status" value="1"/>
</dbReference>
<dbReference type="Pfam" id="PF01513">
    <property type="entry name" value="NAD_kinase"/>
    <property type="match status" value="1"/>
</dbReference>
<dbReference type="Pfam" id="PF20143">
    <property type="entry name" value="NAD_kinase_C"/>
    <property type="match status" value="1"/>
</dbReference>
<dbReference type="SUPFAM" id="SSF111331">
    <property type="entry name" value="NAD kinase/diacylglycerol kinase-like"/>
    <property type="match status" value="1"/>
</dbReference>
<organism>
    <name type="scientific">Clostridium botulinum (strain Okra / Type B1)</name>
    <dbReference type="NCBI Taxonomy" id="498213"/>
    <lineage>
        <taxon>Bacteria</taxon>
        <taxon>Bacillati</taxon>
        <taxon>Bacillota</taxon>
        <taxon>Clostridia</taxon>
        <taxon>Eubacteriales</taxon>
        <taxon>Clostridiaceae</taxon>
        <taxon>Clostridium</taxon>
    </lineage>
</organism>
<name>NADK_CLOBK</name>
<feature type="chain" id="PRO_1000120846" description="NAD kinase">
    <location>
        <begin position="1"/>
        <end position="281"/>
    </location>
</feature>
<feature type="active site" description="Proton acceptor" evidence="1">
    <location>
        <position position="61"/>
    </location>
</feature>
<feature type="binding site" evidence="1">
    <location>
        <begin position="61"/>
        <end position="62"/>
    </location>
    <ligand>
        <name>NAD(+)</name>
        <dbReference type="ChEBI" id="CHEBI:57540"/>
    </ligand>
</feature>
<feature type="binding site" evidence="1">
    <location>
        <begin position="134"/>
        <end position="135"/>
    </location>
    <ligand>
        <name>NAD(+)</name>
        <dbReference type="ChEBI" id="CHEBI:57540"/>
    </ligand>
</feature>
<feature type="binding site" evidence="1">
    <location>
        <position position="145"/>
    </location>
    <ligand>
        <name>NAD(+)</name>
        <dbReference type="ChEBI" id="CHEBI:57540"/>
    </ligand>
</feature>
<feature type="binding site" evidence="1">
    <location>
        <position position="164"/>
    </location>
    <ligand>
        <name>NAD(+)</name>
        <dbReference type="ChEBI" id="CHEBI:57540"/>
    </ligand>
</feature>
<feature type="binding site" evidence="1">
    <location>
        <begin position="175"/>
        <end position="180"/>
    </location>
    <ligand>
        <name>NAD(+)</name>
        <dbReference type="ChEBI" id="CHEBI:57540"/>
    </ligand>
</feature>
<feature type="binding site" evidence="1">
    <location>
        <position position="234"/>
    </location>
    <ligand>
        <name>NAD(+)</name>
        <dbReference type="ChEBI" id="CHEBI:57540"/>
    </ligand>
</feature>
<proteinExistence type="inferred from homology"/>
<keyword id="KW-0067">ATP-binding</keyword>
<keyword id="KW-0963">Cytoplasm</keyword>
<keyword id="KW-0418">Kinase</keyword>
<keyword id="KW-0520">NAD</keyword>
<keyword id="KW-0521">NADP</keyword>
<keyword id="KW-0547">Nucleotide-binding</keyword>
<keyword id="KW-0808">Transferase</keyword>
<protein>
    <recommendedName>
        <fullName evidence="1">NAD kinase</fullName>
        <ecNumber evidence="1">2.7.1.23</ecNumber>
    </recommendedName>
    <alternativeName>
        <fullName evidence="1">ATP-dependent NAD kinase</fullName>
    </alternativeName>
</protein>
<sequence>MKNIGININTDKDISRNILDKIFQYIHEECSEAKIKVFYDSKGLDNEESRALDAVMVLGGDGTILGTARALAKYDVPIFGINRGHLGFLAEIELEDCKKAIKNLFKGQYKIEDRIMLKCDLKGIDKKDDFLALNDIVLTKGNLSRIVKYSIYVDDVWYTTFVADGVIVATPTGSTAYSLSAGGPIVYPDLDVLEIAPICPHSLGIRPILLNGNSKINIRVLKKYEDPVLTIDGQRYKKVTVNEVTISKSEYKCRLIKFKDKDYFKILRTKISYRSRECEGE</sequence>
<gene>
    <name evidence="1" type="primary">nadK</name>
    <name type="ordered locus">CLD_2758</name>
</gene>
<comment type="function">
    <text evidence="1">Involved in the regulation of the intracellular balance of NAD and NADP, and is a key enzyme in the biosynthesis of NADP. Catalyzes specifically the phosphorylation on 2'-hydroxyl of the adenosine moiety of NAD to yield NADP.</text>
</comment>
<comment type="catalytic activity">
    <reaction evidence="1">
        <text>NAD(+) + ATP = ADP + NADP(+) + H(+)</text>
        <dbReference type="Rhea" id="RHEA:18629"/>
        <dbReference type="ChEBI" id="CHEBI:15378"/>
        <dbReference type="ChEBI" id="CHEBI:30616"/>
        <dbReference type="ChEBI" id="CHEBI:57540"/>
        <dbReference type="ChEBI" id="CHEBI:58349"/>
        <dbReference type="ChEBI" id="CHEBI:456216"/>
        <dbReference type="EC" id="2.7.1.23"/>
    </reaction>
</comment>
<comment type="cofactor">
    <cofactor evidence="1">
        <name>a divalent metal cation</name>
        <dbReference type="ChEBI" id="CHEBI:60240"/>
    </cofactor>
</comment>
<comment type="subcellular location">
    <subcellularLocation>
        <location evidence="1">Cytoplasm</location>
    </subcellularLocation>
</comment>
<comment type="similarity">
    <text evidence="1">Belongs to the NAD kinase family.</text>
</comment>
<accession>B1IMN2</accession>
<evidence type="ECO:0000255" key="1">
    <source>
        <dbReference type="HAMAP-Rule" id="MF_00361"/>
    </source>
</evidence>
<reference key="1">
    <citation type="journal article" date="2007" name="PLoS ONE">
        <title>Analysis of the neurotoxin complex genes in Clostridium botulinum A1-A4 and B1 strains: BoNT/A3, /Ba4 and /B1 clusters are located within plasmids.</title>
        <authorList>
            <person name="Smith T.J."/>
            <person name="Hill K.K."/>
            <person name="Foley B.T."/>
            <person name="Detter J.C."/>
            <person name="Munk A.C."/>
            <person name="Bruce D.C."/>
            <person name="Doggett N.A."/>
            <person name="Smith L.A."/>
            <person name="Marks J.D."/>
            <person name="Xie G."/>
            <person name="Brettin T.S."/>
        </authorList>
    </citation>
    <scope>NUCLEOTIDE SEQUENCE [LARGE SCALE GENOMIC DNA]</scope>
    <source>
        <strain>Okra / Type B1</strain>
    </source>
</reference>